<organism>
    <name type="scientific">Pseudomonas aeruginosa (strain ATCC 15692 / DSM 22644 / CIP 104116 / JCM 14847 / LMG 12228 / 1C / PRS 101 / PAO1)</name>
    <dbReference type="NCBI Taxonomy" id="208964"/>
    <lineage>
        <taxon>Bacteria</taxon>
        <taxon>Pseudomonadati</taxon>
        <taxon>Pseudomonadota</taxon>
        <taxon>Gammaproteobacteria</taxon>
        <taxon>Pseudomonadales</taxon>
        <taxon>Pseudomonadaceae</taxon>
        <taxon>Pseudomonas</taxon>
    </lineage>
</organism>
<protein>
    <recommendedName>
        <fullName evidence="6">AMB antimetabolite synthetase AmbE</fullName>
        <ecNumber evidence="4">6.2.1.68</ecNumber>
    </recommendedName>
    <alternativeName>
        <fullName evidence="6">L-glutamate--[L-glutamyl-carrier protein] ligase</fullName>
    </alternativeName>
    <alternativeName>
        <fullName evidence="6">Nonribosomal peptide synthetase AmbE</fullName>
    </alternativeName>
</protein>
<sequence length="2124" mass="229044">MSASEDLQSAVQPAASEALEGFPLSPLQTRAWRRHAERPENTVVGVRLHAPADPVATLERLRRALDGEAQLRVAYRTMPGMSLPVQVLDGRAADLLVERLPGDGDWAGRFARESARLAASPLGGEGQPVLALGLLLDAAGETLQGLLLAAPAFVVDAASLVALLRRGLGPAGQASADEGDEALLFQHFSEWANEALAGEDGESASGYWREQAAVAAESPLALADDLGEGEWTARRLLPRALLERLAANGLPEAAALLAWTQVAGQFQGDEGLPLEMARLVSGRLFNEFAELAGPFAGVAPLCLENVRAGSVGERLDALQAAILAQEEAAALRDPFAPDWPLAELGFAWLAGELDGAGVAELDCRQPPLGGFLELQVLPHGEGRLASLRVRRDHDGTLAGRLLDAWVECLESIAADRQLPLAGLPLIGAAERERYQAWQGERVEPAPVESLVAAFDLRAALQPQAPALLDAHGSLDFATLRARSEAVAEALLAAGVRPGQAVAVMTGRNREAIVALLGVMRAAAVYTPVNPEFPAARVERMREAGGIVFALADAECAGRAREAFAGACLDLSTLPLAGSGMSLPAPGGRDAAYMIFTSGTSGQPKGVVVEHASALNLSQALARTVYANVVGEGLRVTVNAPFSFDSSIKQILQLLSGHCLVLVPQEVRSDPQRMLGFLEERRIDVLDCTPSLFRLLLQAGLDDAHPALPGRILVGGERFDEASWEVAAGWRRCQVFNLYGPTEATVNASLARVAEHARPTIGRALANVDLHVVDGLGRRKTRGASGELWIGGAGVARGYAGDAGEAAGRFVEEGWPGSGRLYRSGDLVRWRADGCLEFLGRIDEQVKINGYRIELGEIRSALLEHPAVGEAAVLTDEADAAEPGADRRIVAFVTAAEETADESWLEVDLPSGHRVAGLNLNETEYVYQEIFVDEVYSRDGIVLPPDAVVLDVGANIGLFSLYIASRAPRARVVAFEPLAPIRRRLEANLGRYAPQVEVFGIGLSDAEREETFTYYPGYSTFSGIAEYADASGERDVIRRYLSNQGEEGGANLLLDNIDEILDDRLRAEAHRCRLRRLDQVIGELGLERIDLLKIDVQRAEMDVLLGLDDAALAKVRQIVLEVHDKRDGATAGRADALSDLLRRHGFEVSIRQDALLEGTDRYNCYAVRPGYAESLAERIDWRALAPRPAAALGGELSEQALRGFLEARLPAYMLPSRIARVERLPLTAEGKLDRRALLAALAAEAAAQTLEAPANATEAALLEIWKSVLKRPAIGVSDNFFQVGGDSIRLIQMQVMAREAGLAFTLRDVFNHQSIRELARLLAAPASPADALGTSAPQSLEPFALLSAAERKRLPEGLDDAYPMTSLQQGMLLQSEASGDPRLLHNVVLHEVHGRLDGELLARAWAILIGRHAILRTGFDLHGGQVPLQWVHPATAVAAEVPVHDLCGLDGETRRLRLRAWIEEEQATPFDWSRPPLVRLAALALDERRFALGVAEHHSVLDGWSLQSLVDELLAVYADLLAGVVAREAEAPAVGFRDYVALEREAEANAASALFWLDYLAGARYRPLPGLAEEGPRRMAAVRVDVPADSLSRLRALAERSGLPLRSLLLAAHGRALCRFSDADEVVTGFVSHGRPEEPGADRLLGLFLNTLPCRLSASVDLLDSARRAFDYERASLEHRRHPLAAIRRRNRELRLDSLFNFVDFHQDDAAPAGVRHGGILDQVVVDVDVPLAVDFEVAGERLEVGFQYAAGRFPAERAEALAGAYREALLALLGDPVQPPAAAQAEDSVELRRVLKVLSRVLGRPLAADQGFASAGGHSLLGVQAIAELRRLTGRQLSLGLLQGDPDAREVVRRCHAADAPPLPPATERARALWLQRSGSAQPRLRLIALPPAGGNAGTFRGWDARLPADVELLAIQYPGRQERQDEPFVTDVEAMLCAIDDALLPLLDRPFALIGASLGGMLAYELAARLESLHGLRARQLFVISSRAPGPDLEYPRFHAMGDAELLRTLREYDVLPLEVLDDPELREISLATLRADSRLAADYRYRPREPLAIPITAILGEQDPGVSRVAIDGWRRHASRYELETLAGGHGLVVTAAEEVCAILRQRLAPDVPGGVPANLAT</sequence>
<gene>
    <name evidence="5" type="primary">ambE</name>
    <name evidence="8" type="ordered locus">PA2302</name>
</gene>
<dbReference type="EC" id="6.2.1.68" evidence="4"/>
<dbReference type="EMBL" id="AE004091">
    <property type="protein sequence ID" value="AAG05690.1"/>
    <property type="molecule type" value="Genomic_DNA"/>
</dbReference>
<dbReference type="PIR" id="H83357">
    <property type="entry name" value="H83357"/>
</dbReference>
<dbReference type="RefSeq" id="NP_250992.1">
    <property type="nucleotide sequence ID" value="NC_002516.2"/>
</dbReference>
<dbReference type="RefSeq" id="WP_010895606.1">
    <property type="nucleotide sequence ID" value="NZ_QZGE01000036.1"/>
</dbReference>
<dbReference type="PDB" id="7R9X">
    <property type="method" value="X-ray"/>
    <property type="resolution" value="2.14 A"/>
    <property type="chains" value="A/B=1353-1787"/>
</dbReference>
<dbReference type="PDBsum" id="7R9X"/>
<dbReference type="SMR" id="Q9I1H3"/>
<dbReference type="STRING" id="208964.PA2302"/>
<dbReference type="ESTHER" id="pseae-PA2302">
    <property type="family name" value="Thioesterase"/>
</dbReference>
<dbReference type="PaxDb" id="208964-PA2302"/>
<dbReference type="GeneID" id="878274"/>
<dbReference type="KEGG" id="pae:PA2302"/>
<dbReference type="PATRIC" id="fig|208964.12.peg.2406"/>
<dbReference type="PseudoCAP" id="PA2302"/>
<dbReference type="HOGENOM" id="CLU_236504_0_0_6"/>
<dbReference type="InParanoid" id="Q9I1H3"/>
<dbReference type="OrthoDB" id="9757559at2"/>
<dbReference type="PhylomeDB" id="Q9I1H3"/>
<dbReference type="BioCyc" id="MetaCyc:MONOMER-20273"/>
<dbReference type="BioCyc" id="PAER208964:G1FZ6-2341-MONOMER"/>
<dbReference type="BRENDA" id="6.2.1.68">
    <property type="organism ID" value="5087"/>
</dbReference>
<dbReference type="Proteomes" id="UP000002438">
    <property type="component" value="Chromosome"/>
</dbReference>
<dbReference type="GO" id="GO:0016874">
    <property type="term" value="F:ligase activity"/>
    <property type="evidence" value="ECO:0007669"/>
    <property type="project" value="UniProtKB-KW"/>
</dbReference>
<dbReference type="GO" id="GO:0031177">
    <property type="term" value="F:phosphopantetheine binding"/>
    <property type="evidence" value="ECO:0007669"/>
    <property type="project" value="InterPro"/>
</dbReference>
<dbReference type="GO" id="GO:0044550">
    <property type="term" value="P:secondary metabolite biosynthetic process"/>
    <property type="evidence" value="ECO:0007669"/>
    <property type="project" value="UniProtKB-ARBA"/>
</dbReference>
<dbReference type="CDD" id="cd05930">
    <property type="entry name" value="A_NRPS"/>
    <property type="match status" value="1"/>
</dbReference>
<dbReference type="CDD" id="cd19536">
    <property type="entry name" value="DCL_NRPS-like"/>
    <property type="match status" value="1"/>
</dbReference>
<dbReference type="FunFam" id="1.10.1200.10:FF:000005">
    <property type="entry name" value="Nonribosomal peptide synthetase 1"/>
    <property type="match status" value="1"/>
</dbReference>
<dbReference type="Gene3D" id="3.30.300.30">
    <property type="match status" value="2"/>
</dbReference>
<dbReference type="Gene3D" id="1.10.1200.10">
    <property type="entry name" value="ACP-like"/>
    <property type="match status" value="2"/>
</dbReference>
<dbReference type="Gene3D" id="3.40.50.1820">
    <property type="entry name" value="alpha/beta hydrolase"/>
    <property type="match status" value="1"/>
</dbReference>
<dbReference type="Gene3D" id="3.30.559.10">
    <property type="entry name" value="Chloramphenicol acetyltransferase-like domain"/>
    <property type="match status" value="2"/>
</dbReference>
<dbReference type="Gene3D" id="3.40.50.12780">
    <property type="entry name" value="N-terminal domain of ligase-like"/>
    <property type="match status" value="1"/>
</dbReference>
<dbReference type="Gene3D" id="3.30.559.30">
    <property type="entry name" value="Nonribosomal peptide synthetase, condensation domain"/>
    <property type="match status" value="2"/>
</dbReference>
<dbReference type="Gene3D" id="3.40.50.150">
    <property type="entry name" value="Vaccinia Virus protein VP39"/>
    <property type="match status" value="1"/>
</dbReference>
<dbReference type="InterPro" id="IPR010071">
    <property type="entry name" value="AA_adenyl_dom"/>
</dbReference>
<dbReference type="InterPro" id="IPR029058">
    <property type="entry name" value="AB_hydrolase_fold"/>
</dbReference>
<dbReference type="InterPro" id="IPR036736">
    <property type="entry name" value="ACP-like_sf"/>
</dbReference>
<dbReference type="InterPro" id="IPR045851">
    <property type="entry name" value="AMP-bd_C_sf"/>
</dbReference>
<dbReference type="InterPro" id="IPR020845">
    <property type="entry name" value="AMP-binding_CS"/>
</dbReference>
<dbReference type="InterPro" id="IPR000873">
    <property type="entry name" value="AMP-dep_synth/lig_dom"/>
</dbReference>
<dbReference type="InterPro" id="IPR042099">
    <property type="entry name" value="ANL_N_sf"/>
</dbReference>
<dbReference type="InterPro" id="IPR050237">
    <property type="entry name" value="ATP-dep_AMP-bd_enzyme"/>
</dbReference>
<dbReference type="InterPro" id="IPR023213">
    <property type="entry name" value="CAT-like_dom_sf"/>
</dbReference>
<dbReference type="InterPro" id="IPR001242">
    <property type="entry name" value="Condensatn"/>
</dbReference>
<dbReference type="InterPro" id="IPR006342">
    <property type="entry name" value="FkbM_mtfrase"/>
</dbReference>
<dbReference type="InterPro" id="IPR020806">
    <property type="entry name" value="PKS_PP-bd"/>
</dbReference>
<dbReference type="InterPro" id="IPR020802">
    <property type="entry name" value="PKS_thioesterase"/>
</dbReference>
<dbReference type="InterPro" id="IPR009081">
    <property type="entry name" value="PP-bd_ACP"/>
</dbReference>
<dbReference type="InterPro" id="IPR006162">
    <property type="entry name" value="Ppantetheine_attach_site"/>
</dbReference>
<dbReference type="InterPro" id="IPR029063">
    <property type="entry name" value="SAM-dependent_MTases_sf"/>
</dbReference>
<dbReference type="InterPro" id="IPR001031">
    <property type="entry name" value="Thioesterase"/>
</dbReference>
<dbReference type="NCBIfam" id="TIGR01733">
    <property type="entry name" value="AA-adenyl-dom"/>
    <property type="match status" value="1"/>
</dbReference>
<dbReference type="NCBIfam" id="TIGR01444">
    <property type="entry name" value="fkbM_fam"/>
    <property type="match status" value="1"/>
</dbReference>
<dbReference type="PANTHER" id="PTHR43767">
    <property type="entry name" value="LONG-CHAIN-FATTY-ACID--COA LIGASE"/>
    <property type="match status" value="1"/>
</dbReference>
<dbReference type="PANTHER" id="PTHR43767:SF8">
    <property type="entry name" value="LONG-CHAIN-FATTY-ACID--COA LIGASE"/>
    <property type="match status" value="1"/>
</dbReference>
<dbReference type="Pfam" id="PF00501">
    <property type="entry name" value="AMP-binding"/>
    <property type="match status" value="1"/>
</dbReference>
<dbReference type="Pfam" id="PF00668">
    <property type="entry name" value="Condensation"/>
    <property type="match status" value="1"/>
</dbReference>
<dbReference type="Pfam" id="PF05050">
    <property type="entry name" value="Methyltransf_21"/>
    <property type="match status" value="1"/>
</dbReference>
<dbReference type="Pfam" id="PF00550">
    <property type="entry name" value="PP-binding"/>
    <property type="match status" value="2"/>
</dbReference>
<dbReference type="Pfam" id="PF00975">
    <property type="entry name" value="Thioesterase"/>
    <property type="match status" value="1"/>
</dbReference>
<dbReference type="SMART" id="SM00823">
    <property type="entry name" value="PKS_PP"/>
    <property type="match status" value="2"/>
</dbReference>
<dbReference type="SMART" id="SM00824">
    <property type="entry name" value="PKS_TE"/>
    <property type="match status" value="1"/>
</dbReference>
<dbReference type="SUPFAM" id="SSF56801">
    <property type="entry name" value="Acetyl-CoA synthetase-like"/>
    <property type="match status" value="1"/>
</dbReference>
<dbReference type="SUPFAM" id="SSF47336">
    <property type="entry name" value="ACP-like"/>
    <property type="match status" value="2"/>
</dbReference>
<dbReference type="SUPFAM" id="SSF53474">
    <property type="entry name" value="alpha/beta-Hydrolases"/>
    <property type="match status" value="1"/>
</dbReference>
<dbReference type="SUPFAM" id="SSF52777">
    <property type="entry name" value="CoA-dependent acyltransferases"/>
    <property type="match status" value="4"/>
</dbReference>
<dbReference type="SUPFAM" id="SSF53335">
    <property type="entry name" value="S-adenosyl-L-methionine-dependent methyltransferases"/>
    <property type="match status" value="1"/>
</dbReference>
<dbReference type="PROSITE" id="PS00455">
    <property type="entry name" value="AMP_BINDING"/>
    <property type="match status" value="1"/>
</dbReference>
<dbReference type="PROSITE" id="PS50075">
    <property type="entry name" value="CARRIER"/>
    <property type="match status" value="1"/>
</dbReference>
<dbReference type="PROSITE" id="PS00012">
    <property type="entry name" value="PHOSPHOPANTETHEINE"/>
    <property type="match status" value="1"/>
</dbReference>
<feature type="chain" id="PRO_0000454846" description="AMB antimetabolite synthetase AmbE">
    <location>
        <begin position="1"/>
        <end position="2124"/>
    </location>
</feature>
<feature type="domain" description="Carrier 1" evidence="1">
    <location>
        <begin position="1251"/>
        <end position="1325"/>
    </location>
</feature>
<feature type="domain" description="Carrier 2" evidence="1">
    <location>
        <begin position="1785"/>
        <end position="1859"/>
    </location>
</feature>
<feature type="region of interest" description="Adenylation" evidence="6">
    <location>
        <begin position="456"/>
        <end position="847"/>
    </location>
</feature>
<feature type="region of interest" description="Methyltransferase" evidence="6">
    <location>
        <begin position="950"/>
        <end position="1147"/>
    </location>
</feature>
<feature type="region of interest" description="Condensation" evidence="6">
    <location>
        <begin position="1359"/>
        <end position="1780"/>
    </location>
</feature>
<feature type="region of interest" description="Thioesterase" evidence="6">
    <location>
        <begin position="1886"/>
        <end position="2107"/>
    </location>
</feature>
<feature type="modified residue" description="O-(pantetheine 4'-phosphoryl)serine" evidence="1">
    <location>
        <position position="1286"/>
    </location>
</feature>
<feature type="modified residue" description="O-(pantetheine 4'-phosphoryl)serine" evidence="1">
    <location>
        <position position="1819"/>
    </location>
</feature>
<feature type="mutagenesis site" description="Cannot load L-glutamate; when associated with T-1230." evidence="4">
    <original>D</original>
    <variation>A</variation>
    <location>
        <position position="644"/>
    </location>
</feature>
<feature type="mutagenesis site" description="Cannot load L-glutamate; when associated with A-644." evidence="4">
    <original>K</original>
    <variation>T</variation>
    <location>
        <position position="1230"/>
    </location>
</feature>
<feature type="mutagenesis site" description="Cannot load L-glutamate. Mutant loses the ability to make AMB." evidence="4">
    <original>S</original>
    <variation>A</variation>
    <location>
        <position position="1286"/>
    </location>
</feature>
<feature type="mutagenesis site" description="Can still load L-glutamate. Mutant loses the ability to make AMB." evidence="4">
    <original>S</original>
    <variation>A</variation>
    <location>
        <position position="1819"/>
    </location>
</feature>
<feature type="strand" evidence="9">
    <location>
        <begin position="1358"/>
        <end position="1362"/>
    </location>
</feature>
<feature type="helix" evidence="9">
    <location>
        <begin position="1365"/>
        <end position="1376"/>
    </location>
</feature>
<feature type="strand" evidence="9">
    <location>
        <begin position="1384"/>
        <end position="1393"/>
    </location>
</feature>
<feature type="helix" evidence="9">
    <location>
        <begin position="1397"/>
        <end position="1410"/>
    </location>
</feature>
<feature type="helix" evidence="9">
    <location>
        <begin position="1412"/>
        <end position="1415"/>
    </location>
</feature>
<feature type="strand" evidence="9">
    <location>
        <begin position="1416"/>
        <end position="1425"/>
    </location>
</feature>
<feature type="strand" evidence="9">
    <location>
        <begin position="1427"/>
        <end position="1430"/>
    </location>
</feature>
<feature type="helix" evidence="9">
    <location>
        <begin position="1433"/>
        <end position="1435"/>
    </location>
</feature>
<feature type="strand" evidence="9">
    <location>
        <begin position="1442"/>
        <end position="1444"/>
    </location>
</feature>
<feature type="helix" evidence="9">
    <location>
        <begin position="1450"/>
        <end position="1465"/>
    </location>
</feature>
<feature type="strand" evidence="9">
    <location>
        <begin position="1476"/>
        <end position="1485"/>
    </location>
</feature>
<feature type="strand" evidence="9">
    <location>
        <begin position="1488"/>
        <end position="1496"/>
    </location>
</feature>
<feature type="turn" evidence="9">
    <location>
        <begin position="1497"/>
        <end position="1499"/>
    </location>
</feature>
<feature type="helix" evidence="9">
    <location>
        <begin position="1502"/>
        <end position="1521"/>
    </location>
</feature>
<feature type="helix" evidence="9">
    <location>
        <begin position="1535"/>
        <end position="1546"/>
    </location>
</feature>
<feature type="helix" evidence="9">
    <location>
        <begin position="1549"/>
        <end position="1559"/>
    </location>
</feature>
<feature type="strand" evidence="9">
    <location>
        <begin position="1578"/>
        <end position="1582"/>
    </location>
</feature>
<feature type="helix" evidence="9">
    <location>
        <begin position="1589"/>
        <end position="1600"/>
    </location>
</feature>
<feature type="helix" evidence="9">
    <location>
        <begin position="1604"/>
        <end position="1620"/>
    </location>
</feature>
<feature type="strand" evidence="9">
    <location>
        <begin position="1623"/>
        <end position="1632"/>
    </location>
</feature>
<feature type="helix" evidence="9">
    <location>
        <begin position="1640"/>
        <end position="1642"/>
    </location>
</feature>
<feature type="strand" evidence="9">
    <location>
        <begin position="1648"/>
        <end position="1656"/>
    </location>
</feature>
<feature type="helix" evidence="9">
    <location>
        <begin position="1661"/>
        <end position="1675"/>
    </location>
</feature>
<feature type="helix" evidence="9">
    <location>
        <begin position="1676"/>
        <end position="1678"/>
    </location>
</feature>
<feature type="helix" evidence="9">
    <location>
        <begin position="1683"/>
        <end position="1689"/>
    </location>
</feature>
<feature type="strand" evidence="9">
    <location>
        <begin position="1697"/>
        <end position="1702"/>
    </location>
</feature>
<feature type="strand" evidence="9">
    <location>
        <begin position="1713"/>
        <end position="1722"/>
    </location>
</feature>
<feature type="strand" evidence="9">
    <location>
        <begin position="1728"/>
        <end position="1738"/>
    </location>
</feature>
<feature type="strand" evidence="9">
    <location>
        <begin position="1741"/>
        <end position="1749"/>
    </location>
</feature>
<feature type="turn" evidence="9">
    <location>
        <begin position="1750"/>
        <end position="1752"/>
    </location>
</feature>
<feature type="helix" evidence="9">
    <location>
        <begin position="1755"/>
        <end position="1773"/>
    </location>
</feature>
<comment type="function">
    <text evidence="2 4">Involved in the biosynthesis of the antimetabolite L-2-amino-4-methoxy-trans-3-butenoic acid (AMB), a non-proteinogenic amino acid which is toxic for prokaryotes and eukaryotes (PubMed:20543073, PubMed:25814981). Adenylates L-glutamate and loads it onto its first peptidyl carrier domain via a thioester linkage to the phosphopanthetheine moiety (PubMed:25814981). The second peptidyl carrier domain is loaded with a L-alanine activated by AmbB (PubMed:25814981). After formation by AmbB of the L-Glu-L-Ala dipeptide at the first carrier domain of AmbE, the condensation domain of AmbE probably condenses this dipeptide with the L-Ala residue attached at the second carrier domain of AmbE to give the L-Ala-L-Glu-L-Ala tripeptide. The central amino acid, L-Glu, would then undergo a series of modifications to be converted into AMB while the two flanking L-Ala residues remain in place (PubMed:25814981). Finally, the L-Ala-AMB-L-Ala tripeptide is probably released by thioester cleavage via the thioester domain of AmbE (PubMed:25814981).</text>
</comment>
<comment type="catalytic activity">
    <reaction evidence="4">
        <text>holo-[peptidyl-carrier protein] + L-glutamate + ATP = L-glutamyl-[peptidyl-carrier protein] + AMP + diphosphate</text>
        <dbReference type="Rhea" id="RHEA:62452"/>
        <dbReference type="Rhea" id="RHEA-COMP:11480"/>
        <dbReference type="Rhea" id="RHEA-COMP:16100"/>
        <dbReference type="ChEBI" id="CHEBI:29985"/>
        <dbReference type="ChEBI" id="CHEBI:30616"/>
        <dbReference type="ChEBI" id="CHEBI:33019"/>
        <dbReference type="ChEBI" id="CHEBI:64479"/>
        <dbReference type="ChEBI" id="CHEBI:144960"/>
        <dbReference type="ChEBI" id="CHEBI:456215"/>
        <dbReference type="EC" id="6.2.1.68"/>
    </reaction>
    <physiologicalReaction direction="left-to-right" evidence="4">
        <dbReference type="Rhea" id="RHEA:62453"/>
    </physiologicalReaction>
</comment>
<comment type="cofactor">
    <cofactor evidence="4">
        <name>pantetheine 4'-phosphate</name>
        <dbReference type="ChEBI" id="CHEBI:47942"/>
    </cofactor>
</comment>
<comment type="induction">
    <text evidence="3">Expression is regulated by the PhoR-PhoB two-component system.</text>
</comment>
<comment type="domain">
    <text evidence="7">Modular protein that contains an adenylation domain which activates the glutamate residue into an aminoacyl-AMP ester, a methyltransferase domain, a first peptidyl carrier protein domain which bears a phosphopantetheinyl arm to attach the activated L-glutamate, a condensation domain involved in the condensation of this amino acid with a second amino acid bound at the carrier protein domain of another module, a second peptidyl carrier protein domain which bears a phosphopantetheinyl arm to attach a L-alanine activated by AmbB and a thioesterase domain that may release the newly synthesized peptide from the enzyme.</text>
</comment>
<comment type="disruption phenotype">
    <text evidence="2 3">Mutation abolishes AMB production (PubMed:20543073). Deletion of the gene causes a substantial reduction in the production of the quorum sensing signal 2-heptyl-3-hydroxy-4(1H)-quinolone (PQS) (PubMed:23542643).</text>
</comment>
<comment type="similarity">
    <text evidence="6">Belongs to the NRP synthetase family.</text>
</comment>
<comment type="caution">
    <text evidence="3 4">It was suggested by Lee et al that the amb cluster is involved in the biosynthesis of 2-(2-hydroxyphenyl)-thiazole-4-carbaldehyde (IQS), a cell-cell communication signal that modulates the production of AMB through the pqs and rhl quorum sensing systems (PubMed:23542643). The chemical structure of IQS indicates that this compound may be assembled from salicylate and cysteine. However, neither of the two peptide synthases encoded by the amb gene cluster present adenylation domains with a specificity for these substrates. It is thus highly implausible that IQS is specified by the amb gene cluster (PubMed:25814981).</text>
</comment>
<accession>Q9I1H3</accession>
<proteinExistence type="evidence at protein level"/>
<reference key="1">
    <citation type="journal article" date="2000" name="Nature">
        <title>Complete genome sequence of Pseudomonas aeruginosa PAO1, an opportunistic pathogen.</title>
        <authorList>
            <person name="Stover C.K."/>
            <person name="Pham X.-Q.T."/>
            <person name="Erwin A.L."/>
            <person name="Mizoguchi S.D."/>
            <person name="Warrener P."/>
            <person name="Hickey M.J."/>
            <person name="Brinkman F.S.L."/>
            <person name="Hufnagle W.O."/>
            <person name="Kowalik D.J."/>
            <person name="Lagrou M."/>
            <person name="Garber R.L."/>
            <person name="Goltry L."/>
            <person name="Tolentino E."/>
            <person name="Westbrock-Wadman S."/>
            <person name="Yuan Y."/>
            <person name="Brody L.L."/>
            <person name="Coulter S.N."/>
            <person name="Folger K.R."/>
            <person name="Kas A."/>
            <person name="Larbig K."/>
            <person name="Lim R.M."/>
            <person name="Smith K.A."/>
            <person name="Spencer D.H."/>
            <person name="Wong G.K.-S."/>
            <person name="Wu Z."/>
            <person name="Paulsen I.T."/>
            <person name="Reizer J."/>
            <person name="Saier M.H. Jr."/>
            <person name="Hancock R.E.W."/>
            <person name="Lory S."/>
            <person name="Olson M.V."/>
        </authorList>
    </citation>
    <scope>NUCLEOTIDE SEQUENCE [LARGE SCALE GENOMIC DNA]</scope>
    <source>
        <strain>ATCC 15692 / DSM 22644 / CIP 104116 / JCM 14847 / LMG 12228 / 1C / PRS 101 / PAO1</strain>
    </source>
</reference>
<reference key="2">
    <citation type="journal article" date="2010" name="J. Bacteriol.">
        <title>Identification of the biosynthetic gene cluster for the Pseudomonas aeruginosa antimetabolite L-2-amino-4-methoxy-trans-3-butenoic acid.</title>
        <authorList>
            <person name="Lee X."/>
            <person name="Fox A."/>
            <person name="Sufrin J."/>
            <person name="Henry H."/>
            <person name="Majcherczyk P."/>
            <person name="Haas D."/>
            <person name="Reimmann C."/>
        </authorList>
    </citation>
    <scope>FUNCTION</scope>
    <scope>DISRUPTION PHENOTYPE</scope>
    <source>
        <strain>ATCC 15692 / DSM 22644 / CIP 104116 / JCM 14847 / LMG 12228 / 1C / PRS 101 / PAO1</strain>
    </source>
</reference>
<reference key="3">
    <citation type="journal article" date="2013" name="Nat. Chem. Biol.">
        <title>A cell-cell communication signal integrates quorum sensing and stress response.</title>
        <authorList>
            <person name="Lee J."/>
            <person name="Wu J."/>
            <person name="Deng Y."/>
            <person name="Wang J."/>
            <person name="Wang C."/>
            <person name="Wang J."/>
            <person name="Chang C."/>
            <person name="Dong Y."/>
            <person name="Williams P."/>
            <person name="Zhang L.H."/>
        </authorList>
    </citation>
    <scope>PROPOSED FUNCTION IN IQS BIOSYNTHESIS</scope>
    <scope>INDUCTION</scope>
    <scope>DISRUPTION PHENOTYPE</scope>
    <source>
        <strain>ATCC 15692 / DSM 22644 / CIP 104116 / JCM 14847 / LMG 12228 / 1C / PRS 101 / PAO1</strain>
    </source>
</reference>
<reference key="4">
    <citation type="journal article" date="2015" name="Front. Microbiol.">
        <title>The Pseudomonas aeruginosa antimetabolite L -2-amino-4-methoxy-trans-3-butenoic acid (AMB) is made from glutamate and two alanine residues via a thiotemplate-linked tripeptide precursor.</title>
        <authorList>
            <person name="Rojas Murcia N."/>
            <person name="Lee X."/>
            <person name="Waridel P."/>
            <person name="Maspoli A."/>
            <person name="Imker H.J."/>
            <person name="Chai T."/>
            <person name="Walsh C.T."/>
            <person name="Reimmann C."/>
        </authorList>
    </citation>
    <scope>FUNCTION</scope>
    <scope>CATALYTIC ACTIVITY</scope>
    <scope>COFACTOR</scope>
    <scope>DOMAIN</scope>
    <scope>MUTAGENESIS OF ASP-644; LYS-1230; SER-1286 AND SER-1819</scope>
    <source>
        <strain>ATCC 15692 / DSM 22644 / CIP 104116 / JCM 14847 / LMG 12228 / 1C / PRS 101 / PAO1</strain>
    </source>
</reference>
<keyword id="KW-0002">3D-structure</keyword>
<keyword id="KW-0436">Ligase</keyword>
<keyword id="KW-0596">Phosphopantetheine</keyword>
<keyword id="KW-0597">Phosphoprotein</keyword>
<keyword id="KW-1185">Reference proteome</keyword>
<keyword id="KW-0677">Repeat</keyword>
<name>AMBE_PSEAE</name>
<evidence type="ECO:0000255" key="1">
    <source>
        <dbReference type="PROSITE-ProRule" id="PRU00258"/>
    </source>
</evidence>
<evidence type="ECO:0000269" key="2">
    <source>
    </source>
</evidence>
<evidence type="ECO:0000269" key="3">
    <source>
    </source>
</evidence>
<evidence type="ECO:0000269" key="4">
    <source>
    </source>
</evidence>
<evidence type="ECO:0000303" key="5">
    <source>
    </source>
</evidence>
<evidence type="ECO:0000305" key="6"/>
<evidence type="ECO:0000305" key="7">
    <source>
    </source>
</evidence>
<evidence type="ECO:0000312" key="8">
    <source>
        <dbReference type="EMBL" id="AAG05690.1"/>
    </source>
</evidence>
<evidence type="ECO:0007829" key="9">
    <source>
        <dbReference type="PDB" id="7R9X"/>
    </source>
</evidence>